<reference key="1">
    <citation type="submission" date="2008-02" db="EMBL/GenBank/DDBJ databases">
        <title>Complete sequence of Escherichia coli C str. ATCC 8739.</title>
        <authorList>
            <person name="Copeland A."/>
            <person name="Lucas S."/>
            <person name="Lapidus A."/>
            <person name="Glavina del Rio T."/>
            <person name="Dalin E."/>
            <person name="Tice H."/>
            <person name="Bruce D."/>
            <person name="Goodwin L."/>
            <person name="Pitluck S."/>
            <person name="Kiss H."/>
            <person name="Brettin T."/>
            <person name="Detter J.C."/>
            <person name="Han C."/>
            <person name="Kuske C.R."/>
            <person name="Schmutz J."/>
            <person name="Larimer F."/>
            <person name="Land M."/>
            <person name="Hauser L."/>
            <person name="Kyrpides N."/>
            <person name="Mikhailova N."/>
            <person name="Ingram L."/>
            <person name="Richardson P."/>
        </authorList>
    </citation>
    <scope>NUCLEOTIDE SEQUENCE [LARGE SCALE GENOMIC DNA]</scope>
    <source>
        <strain>ATCC 8739 / DSM 1576 / NBRC 3972 / NCIMB 8545 / WDCM 00012 / Crooks</strain>
    </source>
</reference>
<name>PLSY_ECOLC</name>
<accession>B1IRQ7</accession>
<protein>
    <recommendedName>
        <fullName evidence="1">Glycerol-3-phosphate acyltransferase</fullName>
    </recommendedName>
    <alternativeName>
        <fullName evidence="1">G3P acyltransferase</fullName>
        <shortName evidence="1">GPAT</shortName>
        <ecNumber evidence="1">2.3.1.15</ecNumber>
        <ecNumber evidence="1">2.3.1.n5</ecNumber>
    </alternativeName>
    <alternativeName>
        <fullName evidence="1">Lysophosphatidic acid synthase</fullName>
        <shortName evidence="1">LPA synthase</shortName>
    </alternativeName>
</protein>
<comment type="function">
    <text evidence="1">Catalyzes the transfer of an acyl group from acyl-ACP to glycerol-3-phosphate (G3P) to form lysophosphatidic acid (LPA). This enzyme can also utilize acyl-CoA as fatty acyl donor, but not acyl-PO(4).</text>
</comment>
<comment type="catalytic activity">
    <reaction evidence="1">
        <text>sn-glycerol 3-phosphate + an acyl-CoA = a 1-acyl-sn-glycero-3-phosphate + CoA</text>
        <dbReference type="Rhea" id="RHEA:15325"/>
        <dbReference type="ChEBI" id="CHEBI:57287"/>
        <dbReference type="ChEBI" id="CHEBI:57597"/>
        <dbReference type="ChEBI" id="CHEBI:57970"/>
        <dbReference type="ChEBI" id="CHEBI:58342"/>
        <dbReference type="EC" id="2.3.1.15"/>
    </reaction>
</comment>
<comment type="catalytic activity">
    <reaction evidence="1">
        <text>a fatty acyl-[ACP] + sn-glycerol 3-phosphate = a 1-acyl-sn-glycero-3-phosphate + holo-[ACP]</text>
        <dbReference type="Rhea" id="RHEA:42300"/>
        <dbReference type="Rhea" id="RHEA-COMP:9685"/>
        <dbReference type="Rhea" id="RHEA-COMP:14125"/>
        <dbReference type="ChEBI" id="CHEBI:57597"/>
        <dbReference type="ChEBI" id="CHEBI:57970"/>
        <dbReference type="ChEBI" id="CHEBI:64479"/>
        <dbReference type="ChEBI" id="CHEBI:138651"/>
        <dbReference type="EC" id="2.3.1.n5"/>
    </reaction>
</comment>
<comment type="pathway">
    <text evidence="1">Lipid metabolism; phospholipid metabolism.</text>
</comment>
<comment type="subunit">
    <text evidence="1">Probably interacts with PlsX.</text>
</comment>
<comment type="subcellular location">
    <subcellularLocation>
        <location evidence="1">Cell inner membrane</location>
        <topology evidence="1">Multi-pass membrane protein</topology>
    </subcellularLocation>
</comment>
<comment type="similarity">
    <text evidence="1">Belongs to the PlsY family.</text>
</comment>
<keyword id="KW-0997">Cell inner membrane</keyword>
<keyword id="KW-1003">Cell membrane</keyword>
<keyword id="KW-0444">Lipid biosynthesis</keyword>
<keyword id="KW-0443">Lipid metabolism</keyword>
<keyword id="KW-0472">Membrane</keyword>
<keyword id="KW-0594">Phospholipid biosynthesis</keyword>
<keyword id="KW-1208">Phospholipid metabolism</keyword>
<keyword id="KW-0808">Transferase</keyword>
<keyword id="KW-0812">Transmembrane</keyword>
<keyword id="KW-1133">Transmembrane helix</keyword>
<evidence type="ECO:0000255" key="1">
    <source>
        <dbReference type="HAMAP-Rule" id="MF_01043"/>
    </source>
</evidence>
<feature type="chain" id="PRO_1000084384" description="Glycerol-3-phosphate acyltransferase">
    <location>
        <begin position="1"/>
        <end position="205"/>
    </location>
</feature>
<feature type="topological domain" description="Periplasmic" evidence="1">
    <location>
        <begin position="1"/>
        <end position="3"/>
    </location>
</feature>
<feature type="transmembrane region" description="Helical" evidence="1">
    <location>
        <begin position="4"/>
        <end position="24"/>
    </location>
</feature>
<feature type="topological domain" description="Cytoplasmic" evidence="1">
    <location>
        <begin position="25"/>
        <end position="52"/>
    </location>
</feature>
<feature type="transmembrane region" description="Helical" evidence="1">
    <location>
        <begin position="53"/>
        <end position="73"/>
    </location>
</feature>
<feature type="topological domain" description="Periplasmic" evidence="1">
    <location>
        <begin position="74"/>
        <end position="80"/>
    </location>
</feature>
<feature type="transmembrane region" description="Helical" evidence="1">
    <location>
        <begin position="81"/>
        <end position="101"/>
    </location>
</feature>
<feature type="topological domain" description="Cytoplasmic" evidence="1">
    <location>
        <begin position="102"/>
        <end position="111"/>
    </location>
</feature>
<feature type="transmembrane region" description="Helical" evidence="1">
    <location>
        <begin position="112"/>
        <end position="132"/>
    </location>
</feature>
<feature type="topological domain" description="Periplasmic" evidence="1">
    <location>
        <begin position="133"/>
        <end position="137"/>
    </location>
</feature>
<feature type="transmembrane region" description="Helical" evidence="1">
    <location>
        <begin position="138"/>
        <end position="158"/>
    </location>
</feature>
<feature type="topological domain" description="Cytoplasmic" evidence="1">
    <location>
        <begin position="159"/>
        <end position="205"/>
    </location>
</feature>
<gene>
    <name evidence="1" type="primary">plsY</name>
    <name type="synonym">ygiH</name>
    <name type="ordered locus">EcolC_0640</name>
</gene>
<organism>
    <name type="scientific">Escherichia coli (strain ATCC 8739 / DSM 1576 / NBRC 3972 / NCIMB 8545 / WDCM 00012 / Crooks)</name>
    <dbReference type="NCBI Taxonomy" id="481805"/>
    <lineage>
        <taxon>Bacteria</taxon>
        <taxon>Pseudomonadati</taxon>
        <taxon>Pseudomonadota</taxon>
        <taxon>Gammaproteobacteria</taxon>
        <taxon>Enterobacterales</taxon>
        <taxon>Enterobacteriaceae</taxon>
        <taxon>Escherichia</taxon>
    </lineage>
</organism>
<proteinExistence type="inferred from homology"/>
<dbReference type="EC" id="2.3.1.15" evidence="1"/>
<dbReference type="EC" id="2.3.1.n5" evidence="1"/>
<dbReference type="EMBL" id="CP000946">
    <property type="protein sequence ID" value="ACA76316.1"/>
    <property type="molecule type" value="Genomic_DNA"/>
</dbReference>
<dbReference type="RefSeq" id="WP_001272796.1">
    <property type="nucleotide sequence ID" value="NZ_MTFT01000027.1"/>
</dbReference>
<dbReference type="SMR" id="B1IRQ7"/>
<dbReference type="GeneID" id="93778934"/>
<dbReference type="KEGG" id="ecl:EcolC_0640"/>
<dbReference type="HOGENOM" id="CLU_081254_0_2_6"/>
<dbReference type="UniPathway" id="UPA00085"/>
<dbReference type="GO" id="GO:0005886">
    <property type="term" value="C:plasma membrane"/>
    <property type="evidence" value="ECO:0007669"/>
    <property type="project" value="UniProtKB-SubCell"/>
</dbReference>
<dbReference type="GO" id="GO:0043772">
    <property type="term" value="F:acyl-phosphate glycerol-3-phosphate acyltransferase activity"/>
    <property type="evidence" value="ECO:0007669"/>
    <property type="project" value="InterPro"/>
</dbReference>
<dbReference type="GO" id="GO:0004366">
    <property type="term" value="F:glycerol-3-phosphate O-acyltransferase activity"/>
    <property type="evidence" value="ECO:0007669"/>
    <property type="project" value="UniProtKB-UniRule"/>
</dbReference>
<dbReference type="GO" id="GO:0008654">
    <property type="term" value="P:phospholipid biosynthetic process"/>
    <property type="evidence" value="ECO:0007669"/>
    <property type="project" value="UniProtKB-UniRule"/>
</dbReference>
<dbReference type="HAMAP" id="MF_01043">
    <property type="entry name" value="PlsY"/>
    <property type="match status" value="1"/>
</dbReference>
<dbReference type="InterPro" id="IPR003811">
    <property type="entry name" value="G3P_acylTferase_PlsY"/>
</dbReference>
<dbReference type="NCBIfam" id="TIGR00023">
    <property type="entry name" value="glycerol-3-phosphate 1-O-acyltransferase PlsY"/>
    <property type="match status" value="1"/>
</dbReference>
<dbReference type="PANTHER" id="PTHR30309:SF0">
    <property type="entry name" value="GLYCEROL-3-PHOSPHATE ACYLTRANSFERASE-RELATED"/>
    <property type="match status" value="1"/>
</dbReference>
<dbReference type="PANTHER" id="PTHR30309">
    <property type="entry name" value="INNER MEMBRANE PROTEIN YGIH"/>
    <property type="match status" value="1"/>
</dbReference>
<dbReference type="Pfam" id="PF02660">
    <property type="entry name" value="G3P_acyltransf"/>
    <property type="match status" value="1"/>
</dbReference>
<dbReference type="SMART" id="SM01207">
    <property type="entry name" value="G3P_acyltransf"/>
    <property type="match status" value="1"/>
</dbReference>
<sequence length="205" mass="22193">MSAIAPGMILIAYLCGSISSAILVCRLCGLPDPRTSGSGNPGATNVLRIGGKGAAVAVLIFDVLKGMLPVWGAYELGVSPFWLGLIAIAACLGHIWPVFFGFKGGKGVATAFGAIAPIGWDLTGVMAGTWLLTVLLSGYSSLGAIVSALIAPFYVWWFKPQFTFPVSMLSCLILLRHHDNIQRLWRRQETKIWTKFKRKREKDPE</sequence>